<name>IOVO_CALSP</name>
<feature type="chain" id="PRO_0000073072" description="Ovomucoid">
    <location>
        <begin position="1" status="less than"/>
        <end position="56" status="greater than"/>
    </location>
</feature>
<feature type="domain" description="Kazal-like" evidence="1">
    <location>
        <begin position="6"/>
        <end position="56"/>
    </location>
</feature>
<feature type="site" description="Reactive bond 3">
    <location>
        <begin position="18"/>
        <end position="19"/>
    </location>
</feature>
<feature type="glycosylation site" description="N-linked (GlcNAc...) asparagine">
    <location>
        <position position="45"/>
    </location>
</feature>
<feature type="disulfide bond">
    <location>
        <begin position="8"/>
        <end position="38"/>
    </location>
</feature>
<feature type="disulfide bond">
    <location>
        <begin position="16"/>
        <end position="35"/>
    </location>
</feature>
<feature type="disulfide bond">
    <location>
        <begin position="24"/>
        <end position="56"/>
    </location>
</feature>
<feature type="non-terminal residue">
    <location>
        <position position="1"/>
    </location>
</feature>
<feature type="non-terminal residue">
    <location>
        <position position="56"/>
    </location>
</feature>
<protein>
    <recommendedName>
        <fullName>Ovomucoid</fullName>
    </recommendedName>
</protein>
<sequence>FAAVSVDCSEYPKPDCTLEYRPLCGSDNKTYASKCNFCNAVVESNGTLTLSHFGKC</sequence>
<comment type="subcellular location">
    <subcellularLocation>
        <location>Secreted</location>
    </subcellularLocation>
</comment>
<comment type="domain">
    <text>Avian ovomucoid consists of three homologous, tandem Kazal family inhibitory domains.</text>
</comment>
<accession>P05588</accession>
<reference key="1">
    <citation type="journal article" date="1987" name="Biochemistry">
        <title>Ovomucoid third domains from 100 avian species: isolation, sequences, and hypervariability of enzyme-inhibitor contact residues.</title>
        <authorList>
            <person name="Laskowski M. Jr."/>
            <person name="Kato I."/>
            <person name="Ardelt W."/>
            <person name="Cook J."/>
            <person name="Denton A."/>
            <person name="Empie M.W."/>
            <person name="Kohr W.J."/>
            <person name="Park S.J."/>
            <person name="Parks K."/>
            <person name="Schatzley B.L."/>
            <person name="Schoenberger O.L."/>
            <person name="Tashiro M."/>
            <person name="Vichot G."/>
            <person name="Whatley H.E."/>
            <person name="Wieczorek A."/>
            <person name="Wieczorek M."/>
        </authorList>
    </citation>
    <scope>PROTEIN SEQUENCE</scope>
</reference>
<reference key="2">
    <citation type="journal article" date="1982" name="Biochemistry">
        <title>Thermodynamics and kinetics of single residue replacements in avian ovomucoid third domains: effect on inhibitor interactions with serine proteinases.</title>
        <authorList>
            <person name="Empie M.W."/>
            <person name="Laskowski M. Jr."/>
        </authorList>
    </citation>
    <scope>PROTEIN SEQUENCE</scope>
</reference>
<evidence type="ECO:0000255" key="1">
    <source>
        <dbReference type="PROSITE-ProRule" id="PRU00798"/>
    </source>
</evidence>
<keyword id="KW-0903">Direct protein sequencing</keyword>
<keyword id="KW-1015">Disulfide bond</keyword>
<keyword id="KW-0325">Glycoprotein</keyword>
<keyword id="KW-0646">Protease inhibitor</keyword>
<keyword id="KW-0677">Repeat</keyword>
<keyword id="KW-0964">Secreted</keyword>
<keyword id="KW-0722">Serine protease inhibitor</keyword>
<proteinExistence type="evidence at protein level"/>
<dbReference type="PIR" id="D31445">
    <property type="entry name" value="D31445"/>
</dbReference>
<dbReference type="SMR" id="P05588"/>
<dbReference type="GO" id="GO:0005576">
    <property type="term" value="C:extracellular region"/>
    <property type="evidence" value="ECO:0007669"/>
    <property type="project" value="UniProtKB-SubCell"/>
</dbReference>
<dbReference type="GO" id="GO:0004867">
    <property type="term" value="F:serine-type endopeptidase inhibitor activity"/>
    <property type="evidence" value="ECO:0007669"/>
    <property type="project" value="UniProtKB-KW"/>
</dbReference>
<dbReference type="CDD" id="cd00104">
    <property type="entry name" value="KAZAL_FS"/>
    <property type="match status" value="1"/>
</dbReference>
<dbReference type="FunFam" id="3.30.60.30:FF:000037">
    <property type="entry name" value="Ovomucoid"/>
    <property type="match status" value="1"/>
</dbReference>
<dbReference type="Gene3D" id="3.30.60.30">
    <property type="match status" value="1"/>
</dbReference>
<dbReference type="InterPro" id="IPR051597">
    <property type="entry name" value="Bifunctional_prot_inhibitor"/>
</dbReference>
<dbReference type="InterPro" id="IPR002350">
    <property type="entry name" value="Kazal_dom"/>
</dbReference>
<dbReference type="InterPro" id="IPR036058">
    <property type="entry name" value="Kazal_dom_sf"/>
</dbReference>
<dbReference type="InterPro" id="IPR001239">
    <property type="entry name" value="Prot_inh_Kazal-m"/>
</dbReference>
<dbReference type="PANTHER" id="PTHR47729:SF1">
    <property type="entry name" value="OVOMUCOID-LIKE-RELATED"/>
    <property type="match status" value="1"/>
</dbReference>
<dbReference type="PANTHER" id="PTHR47729">
    <property type="entry name" value="SERINE PEPTIDASE INHIBITOR, KAZAL TYPE 2, TANDEM DUPLICATE 1-RELATED"/>
    <property type="match status" value="1"/>
</dbReference>
<dbReference type="Pfam" id="PF00050">
    <property type="entry name" value="Kazal_1"/>
    <property type="match status" value="1"/>
</dbReference>
<dbReference type="PRINTS" id="PR00290">
    <property type="entry name" value="KAZALINHBTR"/>
</dbReference>
<dbReference type="SMART" id="SM00280">
    <property type="entry name" value="KAZAL"/>
    <property type="match status" value="1"/>
</dbReference>
<dbReference type="SUPFAM" id="SSF100895">
    <property type="entry name" value="Kazal-type serine protease inhibitors"/>
    <property type="match status" value="1"/>
</dbReference>
<dbReference type="PROSITE" id="PS00282">
    <property type="entry name" value="KAZAL_1"/>
    <property type="match status" value="1"/>
</dbReference>
<dbReference type="PROSITE" id="PS51465">
    <property type="entry name" value="KAZAL_2"/>
    <property type="match status" value="1"/>
</dbReference>
<organism>
    <name type="scientific">Callipepla squamata pallida</name>
    <name type="common">Blue scaled quail</name>
    <dbReference type="NCBI Taxonomy" id="9011"/>
    <lineage>
        <taxon>Eukaryota</taxon>
        <taxon>Metazoa</taxon>
        <taxon>Chordata</taxon>
        <taxon>Craniata</taxon>
        <taxon>Vertebrata</taxon>
        <taxon>Euteleostomi</taxon>
        <taxon>Archelosauria</taxon>
        <taxon>Archosauria</taxon>
        <taxon>Dinosauria</taxon>
        <taxon>Saurischia</taxon>
        <taxon>Theropoda</taxon>
        <taxon>Coelurosauria</taxon>
        <taxon>Aves</taxon>
        <taxon>Neognathae</taxon>
        <taxon>Galloanserae</taxon>
        <taxon>Galliformes</taxon>
        <taxon>Odontophoridae</taxon>
        <taxon>Callipepla</taxon>
    </lineage>
</organism>